<sequence length="382" mass="43331">MGSGEPNPAGKKKKYLKAALYVGDLDPDVTEDMLYKKFRPAGPLRFTRICRDPVTRSPLGYGYVNFRFPADAEWALNTMNFDLINGKPFRLMWSQPDDRLRKSGVGNIFIKNLDKSIDNRALFYLFSAFGNILSCKVVCDDNGSKGYAYVHFDSLAAANRAIWHMNGVRLNNRQVYVGRFKFPEERAAEVRTRDRATFTNVFVKNIGDDIDDEKLKELFCEYGPTESVKVIRDASGKSKGFGFVRYETHEAAQKAVLDLHGKSIDGKVLYVGRAQKKIERLAELRRRFERLRLKEKSRPPGVPIYIKNLDETINDEKLKEEFSSFGSISRAKVMMEVGQGKGFGVVCFSSFEEATKAVDEMNGRIVGSKPLHVTLGQARRRC</sequence>
<organism>
    <name type="scientific">Homo sapiens</name>
    <name type="common">Human</name>
    <dbReference type="NCBI Taxonomy" id="9606"/>
    <lineage>
        <taxon>Eukaryota</taxon>
        <taxon>Metazoa</taxon>
        <taxon>Chordata</taxon>
        <taxon>Craniata</taxon>
        <taxon>Vertebrata</taxon>
        <taxon>Euteleostomi</taxon>
        <taxon>Mammalia</taxon>
        <taxon>Eutheria</taxon>
        <taxon>Euarchontoglires</taxon>
        <taxon>Primates</taxon>
        <taxon>Haplorrhini</taxon>
        <taxon>Catarrhini</taxon>
        <taxon>Hominidae</taxon>
        <taxon>Homo</taxon>
    </lineage>
</organism>
<keyword id="KW-0024">Alternative initiation</keyword>
<keyword id="KW-0963">Cytoplasm</keyword>
<keyword id="KW-0496">Mitochondrion</keyword>
<keyword id="KW-1267">Proteomics identification</keyword>
<keyword id="KW-1185">Reference proteome</keyword>
<keyword id="KW-0677">Repeat</keyword>
<keyword id="KW-0694">RNA-binding</keyword>
<gene>
    <name type="primary">PABPC5</name>
    <name type="synonym">PABP5</name>
</gene>
<protein>
    <recommendedName>
        <fullName>Polyadenylate-binding protein 5</fullName>
        <shortName>PABP-5</shortName>
        <shortName>Poly(A)-binding protein 5</shortName>
    </recommendedName>
</protein>
<name>PABP5_HUMAN</name>
<dbReference type="EMBL" id="AJ278963">
    <property type="protein sequence ID" value="CAC42826.1"/>
    <property type="molecule type" value="Genomic_DNA"/>
</dbReference>
<dbReference type="EMBL" id="AK290105">
    <property type="protein sequence ID" value="BAF82794.1"/>
    <property type="molecule type" value="mRNA"/>
</dbReference>
<dbReference type="EMBL" id="AL662874">
    <property type="status" value="NOT_ANNOTATED_CDS"/>
    <property type="molecule type" value="Genomic_DNA"/>
</dbReference>
<dbReference type="EMBL" id="CH471115">
    <property type="protein sequence ID" value="EAX02776.1"/>
    <property type="molecule type" value="Genomic_DNA"/>
</dbReference>
<dbReference type="EMBL" id="BC063113">
    <property type="protein sequence ID" value="AAH63113.1"/>
    <property type="molecule type" value="mRNA"/>
</dbReference>
<dbReference type="EMBL" id="AL122118">
    <property type="protein sequence ID" value="CAB59276.1"/>
    <property type="molecule type" value="mRNA"/>
</dbReference>
<dbReference type="CCDS" id="CCDS14460.1">
    <molecule id="Q96DU9-1"/>
</dbReference>
<dbReference type="PIR" id="T34543">
    <property type="entry name" value="T34543"/>
</dbReference>
<dbReference type="RefSeq" id="NP_543022.1">
    <molecule id="Q96DU9-1"/>
    <property type="nucleotide sequence ID" value="NM_080832.3"/>
</dbReference>
<dbReference type="SMR" id="Q96DU9"/>
<dbReference type="BioGRID" id="126753">
    <property type="interactions" value="143"/>
</dbReference>
<dbReference type="FunCoup" id="Q96DU9">
    <property type="interactions" value="212"/>
</dbReference>
<dbReference type="IntAct" id="Q96DU9">
    <property type="interactions" value="127"/>
</dbReference>
<dbReference type="STRING" id="9606.ENSP00000308012"/>
<dbReference type="iPTMnet" id="Q96DU9"/>
<dbReference type="PhosphoSitePlus" id="Q96DU9"/>
<dbReference type="BioMuta" id="PABPC5"/>
<dbReference type="DMDM" id="28201851"/>
<dbReference type="jPOST" id="Q96DU9"/>
<dbReference type="MassIVE" id="Q96DU9"/>
<dbReference type="PaxDb" id="9606-ENSP00000308012"/>
<dbReference type="PeptideAtlas" id="Q96DU9"/>
<dbReference type="ProteomicsDB" id="76329">
    <molecule id="Q96DU9-1"/>
</dbReference>
<dbReference type="Pumba" id="Q96DU9"/>
<dbReference type="Antibodypedia" id="398">
    <property type="antibodies" value="96 antibodies from 20 providers"/>
</dbReference>
<dbReference type="DNASU" id="140886"/>
<dbReference type="Ensembl" id="ENST00000312600.4">
    <molecule id="Q96DU9-1"/>
    <property type="protein sequence ID" value="ENSP00000308012.3"/>
    <property type="gene ID" value="ENSG00000174740.8"/>
</dbReference>
<dbReference type="GeneID" id="140886"/>
<dbReference type="KEGG" id="hsa:140886"/>
<dbReference type="MANE-Select" id="ENST00000312600.4">
    <property type="protein sequence ID" value="ENSP00000308012.3"/>
    <property type="RefSeq nucleotide sequence ID" value="NM_080832.3"/>
    <property type="RefSeq protein sequence ID" value="NP_543022.1"/>
</dbReference>
<dbReference type="UCSC" id="uc004efg.4">
    <molecule id="Q96DU9-1"/>
    <property type="organism name" value="human"/>
</dbReference>
<dbReference type="AGR" id="HGNC:13629"/>
<dbReference type="CTD" id="140886"/>
<dbReference type="DisGeNET" id="140886"/>
<dbReference type="GeneCards" id="PABPC5"/>
<dbReference type="HGNC" id="HGNC:13629">
    <property type="gene designation" value="PABPC5"/>
</dbReference>
<dbReference type="HPA" id="ENSG00000174740">
    <property type="expression patterns" value="Tissue enhanced (adrenal gland, ovary)"/>
</dbReference>
<dbReference type="MIM" id="300407">
    <property type="type" value="gene"/>
</dbReference>
<dbReference type="neXtProt" id="NX_Q96DU9"/>
<dbReference type="OpenTargets" id="ENSG00000174740"/>
<dbReference type="PharmGKB" id="PA32884"/>
<dbReference type="VEuPathDB" id="HostDB:ENSG00000174740"/>
<dbReference type="eggNOG" id="KOG0123">
    <property type="taxonomic scope" value="Eukaryota"/>
</dbReference>
<dbReference type="GeneTree" id="ENSGT00940000162668"/>
<dbReference type="HOGENOM" id="CLU_012062_22_6_1"/>
<dbReference type="InParanoid" id="Q96DU9"/>
<dbReference type="OMA" id="CTIFVFY"/>
<dbReference type="OrthoDB" id="19742at2759"/>
<dbReference type="PAN-GO" id="Q96DU9">
    <property type="GO annotations" value="7 GO annotations based on evolutionary models"/>
</dbReference>
<dbReference type="PhylomeDB" id="Q96DU9"/>
<dbReference type="TreeFam" id="TF300458"/>
<dbReference type="PathwayCommons" id="Q96DU9"/>
<dbReference type="SignaLink" id="Q96DU9"/>
<dbReference type="BioGRID-ORCS" id="140886">
    <property type="hits" value="12 hits in 768 CRISPR screens"/>
</dbReference>
<dbReference type="CD-CODE" id="DEE660B4">
    <property type="entry name" value="Stress granule"/>
</dbReference>
<dbReference type="ChiTaRS" id="PABPC5">
    <property type="organism name" value="human"/>
</dbReference>
<dbReference type="GenomeRNAi" id="140886"/>
<dbReference type="Pharos" id="Q96DU9">
    <property type="development level" value="Tdark"/>
</dbReference>
<dbReference type="PRO" id="PR:Q96DU9"/>
<dbReference type="Proteomes" id="UP000005640">
    <property type="component" value="Chromosome X"/>
</dbReference>
<dbReference type="RNAct" id="Q96DU9">
    <property type="molecule type" value="protein"/>
</dbReference>
<dbReference type="Bgee" id="ENSG00000174740">
    <property type="expression patterns" value="Expressed in adrenal tissue and 102 other cell types or tissues"/>
</dbReference>
<dbReference type="ExpressionAtlas" id="Q96DU9">
    <property type="expression patterns" value="baseline and differential"/>
</dbReference>
<dbReference type="GO" id="GO:0010494">
    <property type="term" value="C:cytoplasmic stress granule"/>
    <property type="evidence" value="ECO:0000318"/>
    <property type="project" value="GO_Central"/>
</dbReference>
<dbReference type="GO" id="GO:0005829">
    <property type="term" value="C:cytosol"/>
    <property type="evidence" value="ECO:0000314"/>
    <property type="project" value="FlyBase"/>
</dbReference>
<dbReference type="GO" id="GO:0005759">
    <property type="term" value="C:mitochondrial matrix"/>
    <property type="evidence" value="ECO:0000314"/>
    <property type="project" value="FlyBase"/>
</dbReference>
<dbReference type="GO" id="GO:0005634">
    <property type="term" value="C:nucleus"/>
    <property type="evidence" value="ECO:0000318"/>
    <property type="project" value="GO_Central"/>
</dbReference>
<dbReference type="GO" id="GO:1990904">
    <property type="term" value="C:ribonucleoprotein complex"/>
    <property type="evidence" value="ECO:0000318"/>
    <property type="project" value="GO_Central"/>
</dbReference>
<dbReference type="GO" id="GO:0003730">
    <property type="term" value="F:mRNA 3'-UTR binding"/>
    <property type="evidence" value="ECO:0000318"/>
    <property type="project" value="GO_Central"/>
</dbReference>
<dbReference type="GO" id="GO:0008143">
    <property type="term" value="F:poly(A) binding"/>
    <property type="evidence" value="ECO:0000318"/>
    <property type="project" value="GO_Central"/>
</dbReference>
<dbReference type="GO" id="GO:0008266">
    <property type="term" value="F:poly(U) RNA binding"/>
    <property type="evidence" value="ECO:0000318"/>
    <property type="project" value="GO_Central"/>
</dbReference>
<dbReference type="CDD" id="cd12378">
    <property type="entry name" value="RRM1_I_PABPs"/>
    <property type="match status" value="1"/>
</dbReference>
<dbReference type="CDD" id="cd12379">
    <property type="entry name" value="RRM2_I_PABPs"/>
    <property type="match status" value="1"/>
</dbReference>
<dbReference type="CDD" id="cd12380">
    <property type="entry name" value="RRM3_I_PABPs"/>
    <property type="match status" value="1"/>
</dbReference>
<dbReference type="FunFam" id="3.30.70.330:FF:000003">
    <property type="entry name" value="Polyadenylate-binding protein"/>
    <property type="match status" value="1"/>
</dbReference>
<dbReference type="FunFam" id="3.30.70.330:FF:000049">
    <property type="entry name" value="Polyadenylate-binding protein"/>
    <property type="match status" value="1"/>
</dbReference>
<dbReference type="FunFam" id="3.30.70.330:FF:000234">
    <property type="entry name" value="Polyadenylate-binding protein 5"/>
    <property type="match status" value="1"/>
</dbReference>
<dbReference type="FunFam" id="3.30.70.330:FF:000338">
    <property type="entry name" value="polyadenylate-binding protein 5"/>
    <property type="match status" value="1"/>
</dbReference>
<dbReference type="Gene3D" id="3.30.70.330">
    <property type="match status" value="4"/>
</dbReference>
<dbReference type="InterPro" id="IPR012677">
    <property type="entry name" value="Nucleotide-bd_a/b_plait_sf"/>
</dbReference>
<dbReference type="InterPro" id="IPR006515">
    <property type="entry name" value="PABP_1234"/>
</dbReference>
<dbReference type="InterPro" id="IPR034364">
    <property type="entry name" value="PABP_RRM1"/>
</dbReference>
<dbReference type="InterPro" id="IPR035979">
    <property type="entry name" value="RBD_domain_sf"/>
</dbReference>
<dbReference type="InterPro" id="IPR045305">
    <property type="entry name" value="RRM2_I_PABPs"/>
</dbReference>
<dbReference type="InterPro" id="IPR000504">
    <property type="entry name" value="RRM_dom"/>
</dbReference>
<dbReference type="InterPro" id="IPR003954">
    <property type="entry name" value="RRM_dom_euk"/>
</dbReference>
<dbReference type="NCBIfam" id="TIGR01628">
    <property type="entry name" value="PABP-1234"/>
    <property type="match status" value="1"/>
</dbReference>
<dbReference type="PANTHER" id="PTHR24012">
    <property type="entry name" value="RNA BINDING PROTEIN"/>
    <property type="match status" value="1"/>
</dbReference>
<dbReference type="Pfam" id="PF00076">
    <property type="entry name" value="RRM_1"/>
    <property type="match status" value="4"/>
</dbReference>
<dbReference type="SMART" id="SM00360">
    <property type="entry name" value="RRM"/>
    <property type="match status" value="4"/>
</dbReference>
<dbReference type="SMART" id="SM00361">
    <property type="entry name" value="RRM_1"/>
    <property type="match status" value="3"/>
</dbReference>
<dbReference type="SUPFAM" id="SSF54928">
    <property type="entry name" value="RNA-binding domain, RBD"/>
    <property type="match status" value="2"/>
</dbReference>
<dbReference type="PROSITE" id="PS50102">
    <property type="entry name" value="RRM"/>
    <property type="match status" value="4"/>
</dbReference>
<proteinExistence type="evidence at protein level"/>
<comment type="function">
    <text evidence="1">Binds the poly(A) tail of mRNA. May be involved in cytoplasmic regulatory processes of mRNA metabolism. Can probably bind to cytoplasmic RNA sequences other than poly(A) in vivo (By similarity).</text>
</comment>
<comment type="interaction">
    <interactant intactId="EBI-2880076">
        <id>Q96DU9</id>
    </interactant>
    <interactant intactId="EBI-2957445">
        <id>Q9BPZ3</id>
        <label>PAIP2</label>
    </interactant>
    <organismsDiffer>false</organismsDiffer>
    <experiments>5</experiments>
</comment>
<comment type="subcellular location">
    <subcellularLocation>
        <location evidence="1">Cytoplasm</location>
    </subcellularLocation>
</comment>
<comment type="subcellular location">
    <molecule>Isoform 2</molecule>
    <subcellularLocation>
        <location evidence="3">Mitochondrion matrix</location>
    </subcellularLocation>
    <text>Co-fractionates with mtDNA and co-immunoprecipitates with the mitochondrial poly(A) polymerase.</text>
</comment>
<comment type="alternative products">
    <event type="alternative initiation"/>
    <isoform>
        <id>Q96DU9-1</id>
        <name>1</name>
        <sequence type="displayed"/>
    </isoform>
    <isoform>
        <id>Q96DU9-2</id>
        <name>2</name>
        <sequence type="described" ref="VSP_047456"/>
    </isoform>
</comment>
<comment type="tissue specificity">
    <text>Expressed in fetal brain and in a range of adult tissues.</text>
</comment>
<feature type="chain" id="PRO_0000081705" description="Polyadenylate-binding protein 5">
    <location>
        <begin position="1"/>
        <end position="382"/>
    </location>
</feature>
<feature type="domain" description="RRM 1" evidence="2">
    <location>
        <begin position="18"/>
        <end position="96"/>
    </location>
</feature>
<feature type="domain" description="RRM 2" evidence="2">
    <location>
        <begin position="106"/>
        <end position="182"/>
    </location>
</feature>
<feature type="domain" description="RRM 3" evidence="2">
    <location>
        <begin position="199"/>
        <end position="276"/>
    </location>
</feature>
<feature type="domain" description="RRM 4" evidence="2">
    <location>
        <begin position="302"/>
        <end position="378"/>
    </location>
</feature>
<feature type="splice variant" id="VSP_047456" description="In isoform 2." evidence="4">
    <location>
        <begin position="1"/>
        <end position="32"/>
    </location>
</feature>
<feature type="sequence variant" id="VAR_054049" description="In dbSNP:rs7050077.">
    <original>N</original>
    <variation>S</variation>
    <location>
        <position position="314"/>
    </location>
</feature>
<evidence type="ECO:0000250" key="1"/>
<evidence type="ECO:0000255" key="2">
    <source>
        <dbReference type="PROSITE-ProRule" id="PRU00176"/>
    </source>
</evidence>
<evidence type="ECO:0000269" key="3">
    <source>
    </source>
</evidence>
<evidence type="ECO:0000305" key="4"/>
<accession>Q96DU9</accession>
<accession>A8K240</accession>
<accession>Q5JQF4</accession>
<accession>Q6P529</accession>
<accession>Q9UFE5</accession>
<reference key="1">
    <citation type="journal article" date="2001" name="Genomics">
        <title>A novel poly(A)-binding protein gene (PABPC5) maps to an X-specific subinterval in the Xq21.3/Yp11.2 homology block of the human sex chromosomes.</title>
        <authorList>
            <person name="Blanco P."/>
            <person name="Sargent C.A."/>
            <person name="Boucher C.A."/>
            <person name="Howell G."/>
            <person name="Ross M."/>
            <person name="Affara N.A."/>
        </authorList>
    </citation>
    <scope>NUCLEOTIDE SEQUENCE [GENOMIC DNA]</scope>
    <source>
        <tissue>Brain</tissue>
    </source>
</reference>
<reference key="2">
    <citation type="journal article" date="2004" name="Nat. Genet.">
        <title>Complete sequencing and characterization of 21,243 full-length human cDNAs.</title>
        <authorList>
            <person name="Ota T."/>
            <person name="Suzuki Y."/>
            <person name="Nishikawa T."/>
            <person name="Otsuki T."/>
            <person name="Sugiyama T."/>
            <person name="Irie R."/>
            <person name="Wakamatsu A."/>
            <person name="Hayashi K."/>
            <person name="Sato H."/>
            <person name="Nagai K."/>
            <person name="Kimura K."/>
            <person name="Makita H."/>
            <person name="Sekine M."/>
            <person name="Obayashi M."/>
            <person name="Nishi T."/>
            <person name="Shibahara T."/>
            <person name="Tanaka T."/>
            <person name="Ishii S."/>
            <person name="Yamamoto J."/>
            <person name="Saito K."/>
            <person name="Kawai Y."/>
            <person name="Isono Y."/>
            <person name="Nakamura Y."/>
            <person name="Nagahari K."/>
            <person name="Murakami K."/>
            <person name="Yasuda T."/>
            <person name="Iwayanagi T."/>
            <person name="Wagatsuma M."/>
            <person name="Shiratori A."/>
            <person name="Sudo H."/>
            <person name="Hosoiri T."/>
            <person name="Kaku Y."/>
            <person name="Kodaira H."/>
            <person name="Kondo H."/>
            <person name="Sugawara M."/>
            <person name="Takahashi M."/>
            <person name="Kanda K."/>
            <person name="Yokoi T."/>
            <person name="Furuya T."/>
            <person name="Kikkawa E."/>
            <person name="Omura Y."/>
            <person name="Abe K."/>
            <person name="Kamihara K."/>
            <person name="Katsuta N."/>
            <person name="Sato K."/>
            <person name="Tanikawa M."/>
            <person name="Yamazaki M."/>
            <person name="Ninomiya K."/>
            <person name="Ishibashi T."/>
            <person name="Yamashita H."/>
            <person name="Murakawa K."/>
            <person name="Fujimori K."/>
            <person name="Tanai H."/>
            <person name="Kimata M."/>
            <person name="Watanabe M."/>
            <person name="Hiraoka S."/>
            <person name="Chiba Y."/>
            <person name="Ishida S."/>
            <person name="Ono Y."/>
            <person name="Takiguchi S."/>
            <person name="Watanabe S."/>
            <person name="Yosida M."/>
            <person name="Hotuta T."/>
            <person name="Kusano J."/>
            <person name="Kanehori K."/>
            <person name="Takahashi-Fujii A."/>
            <person name="Hara H."/>
            <person name="Tanase T.-O."/>
            <person name="Nomura Y."/>
            <person name="Togiya S."/>
            <person name="Komai F."/>
            <person name="Hara R."/>
            <person name="Takeuchi K."/>
            <person name="Arita M."/>
            <person name="Imose N."/>
            <person name="Musashino K."/>
            <person name="Yuuki H."/>
            <person name="Oshima A."/>
            <person name="Sasaki N."/>
            <person name="Aotsuka S."/>
            <person name="Yoshikawa Y."/>
            <person name="Matsunawa H."/>
            <person name="Ichihara T."/>
            <person name="Shiohata N."/>
            <person name="Sano S."/>
            <person name="Moriya S."/>
            <person name="Momiyama H."/>
            <person name="Satoh N."/>
            <person name="Takami S."/>
            <person name="Terashima Y."/>
            <person name="Suzuki O."/>
            <person name="Nakagawa S."/>
            <person name="Senoh A."/>
            <person name="Mizoguchi H."/>
            <person name="Goto Y."/>
            <person name="Shimizu F."/>
            <person name="Wakebe H."/>
            <person name="Hishigaki H."/>
            <person name="Watanabe T."/>
            <person name="Sugiyama A."/>
            <person name="Takemoto M."/>
            <person name="Kawakami B."/>
            <person name="Yamazaki M."/>
            <person name="Watanabe K."/>
            <person name="Kumagai A."/>
            <person name="Itakura S."/>
            <person name="Fukuzumi Y."/>
            <person name="Fujimori Y."/>
            <person name="Komiyama M."/>
            <person name="Tashiro H."/>
            <person name="Tanigami A."/>
            <person name="Fujiwara T."/>
            <person name="Ono T."/>
            <person name="Yamada K."/>
            <person name="Fujii Y."/>
            <person name="Ozaki K."/>
            <person name="Hirao M."/>
            <person name="Ohmori Y."/>
            <person name="Kawabata A."/>
            <person name="Hikiji T."/>
            <person name="Kobatake N."/>
            <person name="Inagaki H."/>
            <person name="Ikema Y."/>
            <person name="Okamoto S."/>
            <person name="Okitani R."/>
            <person name="Kawakami T."/>
            <person name="Noguchi S."/>
            <person name="Itoh T."/>
            <person name="Shigeta K."/>
            <person name="Senba T."/>
            <person name="Matsumura K."/>
            <person name="Nakajima Y."/>
            <person name="Mizuno T."/>
            <person name="Morinaga M."/>
            <person name="Sasaki M."/>
            <person name="Togashi T."/>
            <person name="Oyama M."/>
            <person name="Hata H."/>
            <person name="Watanabe M."/>
            <person name="Komatsu T."/>
            <person name="Mizushima-Sugano J."/>
            <person name="Satoh T."/>
            <person name="Shirai Y."/>
            <person name="Takahashi Y."/>
            <person name="Nakagawa K."/>
            <person name="Okumura K."/>
            <person name="Nagase T."/>
            <person name="Nomura N."/>
            <person name="Kikuchi H."/>
            <person name="Masuho Y."/>
            <person name="Yamashita R."/>
            <person name="Nakai K."/>
            <person name="Yada T."/>
            <person name="Nakamura Y."/>
            <person name="Ohara O."/>
            <person name="Isogai T."/>
            <person name="Sugano S."/>
        </authorList>
    </citation>
    <scope>NUCLEOTIDE SEQUENCE [LARGE SCALE MRNA]</scope>
    <source>
        <tissue>Subthalamic nucleus</tissue>
    </source>
</reference>
<reference key="3">
    <citation type="journal article" date="2005" name="Nature">
        <title>The DNA sequence of the human X chromosome.</title>
        <authorList>
            <person name="Ross M.T."/>
            <person name="Grafham D.V."/>
            <person name="Coffey A.J."/>
            <person name="Scherer S."/>
            <person name="McLay K."/>
            <person name="Muzny D."/>
            <person name="Platzer M."/>
            <person name="Howell G.R."/>
            <person name="Burrows C."/>
            <person name="Bird C.P."/>
            <person name="Frankish A."/>
            <person name="Lovell F.L."/>
            <person name="Howe K.L."/>
            <person name="Ashurst J.L."/>
            <person name="Fulton R.S."/>
            <person name="Sudbrak R."/>
            <person name="Wen G."/>
            <person name="Jones M.C."/>
            <person name="Hurles M.E."/>
            <person name="Andrews T.D."/>
            <person name="Scott C.E."/>
            <person name="Searle S."/>
            <person name="Ramser J."/>
            <person name="Whittaker A."/>
            <person name="Deadman R."/>
            <person name="Carter N.P."/>
            <person name="Hunt S.E."/>
            <person name="Chen R."/>
            <person name="Cree A."/>
            <person name="Gunaratne P."/>
            <person name="Havlak P."/>
            <person name="Hodgson A."/>
            <person name="Metzker M.L."/>
            <person name="Richards S."/>
            <person name="Scott G."/>
            <person name="Steffen D."/>
            <person name="Sodergren E."/>
            <person name="Wheeler D.A."/>
            <person name="Worley K.C."/>
            <person name="Ainscough R."/>
            <person name="Ambrose K.D."/>
            <person name="Ansari-Lari M.A."/>
            <person name="Aradhya S."/>
            <person name="Ashwell R.I."/>
            <person name="Babbage A.K."/>
            <person name="Bagguley C.L."/>
            <person name="Ballabio A."/>
            <person name="Banerjee R."/>
            <person name="Barker G.E."/>
            <person name="Barlow K.F."/>
            <person name="Barrett I.P."/>
            <person name="Bates K.N."/>
            <person name="Beare D.M."/>
            <person name="Beasley H."/>
            <person name="Beasley O."/>
            <person name="Beck A."/>
            <person name="Bethel G."/>
            <person name="Blechschmidt K."/>
            <person name="Brady N."/>
            <person name="Bray-Allen S."/>
            <person name="Bridgeman A.M."/>
            <person name="Brown A.J."/>
            <person name="Brown M.J."/>
            <person name="Bonnin D."/>
            <person name="Bruford E.A."/>
            <person name="Buhay C."/>
            <person name="Burch P."/>
            <person name="Burford D."/>
            <person name="Burgess J."/>
            <person name="Burrill W."/>
            <person name="Burton J."/>
            <person name="Bye J.M."/>
            <person name="Carder C."/>
            <person name="Carrel L."/>
            <person name="Chako J."/>
            <person name="Chapman J.C."/>
            <person name="Chavez D."/>
            <person name="Chen E."/>
            <person name="Chen G."/>
            <person name="Chen Y."/>
            <person name="Chen Z."/>
            <person name="Chinault C."/>
            <person name="Ciccodicola A."/>
            <person name="Clark S.Y."/>
            <person name="Clarke G."/>
            <person name="Clee C.M."/>
            <person name="Clegg S."/>
            <person name="Clerc-Blankenburg K."/>
            <person name="Clifford K."/>
            <person name="Cobley V."/>
            <person name="Cole C.G."/>
            <person name="Conquer J.S."/>
            <person name="Corby N."/>
            <person name="Connor R.E."/>
            <person name="David R."/>
            <person name="Davies J."/>
            <person name="Davis C."/>
            <person name="Davis J."/>
            <person name="Delgado O."/>
            <person name="Deshazo D."/>
            <person name="Dhami P."/>
            <person name="Ding Y."/>
            <person name="Dinh H."/>
            <person name="Dodsworth S."/>
            <person name="Draper H."/>
            <person name="Dugan-Rocha S."/>
            <person name="Dunham A."/>
            <person name="Dunn M."/>
            <person name="Durbin K.J."/>
            <person name="Dutta I."/>
            <person name="Eades T."/>
            <person name="Ellwood M."/>
            <person name="Emery-Cohen A."/>
            <person name="Errington H."/>
            <person name="Evans K.L."/>
            <person name="Faulkner L."/>
            <person name="Francis F."/>
            <person name="Frankland J."/>
            <person name="Fraser A.E."/>
            <person name="Galgoczy P."/>
            <person name="Gilbert J."/>
            <person name="Gill R."/>
            <person name="Gloeckner G."/>
            <person name="Gregory S.G."/>
            <person name="Gribble S."/>
            <person name="Griffiths C."/>
            <person name="Grocock R."/>
            <person name="Gu Y."/>
            <person name="Gwilliam R."/>
            <person name="Hamilton C."/>
            <person name="Hart E.A."/>
            <person name="Hawes A."/>
            <person name="Heath P.D."/>
            <person name="Heitmann K."/>
            <person name="Hennig S."/>
            <person name="Hernandez J."/>
            <person name="Hinzmann B."/>
            <person name="Ho S."/>
            <person name="Hoffs M."/>
            <person name="Howden P.J."/>
            <person name="Huckle E.J."/>
            <person name="Hume J."/>
            <person name="Hunt P.J."/>
            <person name="Hunt A.R."/>
            <person name="Isherwood J."/>
            <person name="Jacob L."/>
            <person name="Johnson D."/>
            <person name="Jones S."/>
            <person name="de Jong P.J."/>
            <person name="Joseph S.S."/>
            <person name="Keenan S."/>
            <person name="Kelly S."/>
            <person name="Kershaw J.K."/>
            <person name="Khan Z."/>
            <person name="Kioschis P."/>
            <person name="Klages S."/>
            <person name="Knights A.J."/>
            <person name="Kosiura A."/>
            <person name="Kovar-Smith C."/>
            <person name="Laird G.K."/>
            <person name="Langford C."/>
            <person name="Lawlor S."/>
            <person name="Leversha M."/>
            <person name="Lewis L."/>
            <person name="Liu W."/>
            <person name="Lloyd C."/>
            <person name="Lloyd D.M."/>
            <person name="Loulseged H."/>
            <person name="Loveland J.E."/>
            <person name="Lovell J.D."/>
            <person name="Lozado R."/>
            <person name="Lu J."/>
            <person name="Lyne R."/>
            <person name="Ma J."/>
            <person name="Maheshwari M."/>
            <person name="Matthews L.H."/>
            <person name="McDowall J."/>
            <person name="McLaren S."/>
            <person name="McMurray A."/>
            <person name="Meidl P."/>
            <person name="Meitinger T."/>
            <person name="Milne S."/>
            <person name="Miner G."/>
            <person name="Mistry S.L."/>
            <person name="Morgan M."/>
            <person name="Morris S."/>
            <person name="Mueller I."/>
            <person name="Mullikin J.C."/>
            <person name="Nguyen N."/>
            <person name="Nordsiek G."/>
            <person name="Nyakatura G."/>
            <person name="O'dell C.N."/>
            <person name="Okwuonu G."/>
            <person name="Palmer S."/>
            <person name="Pandian R."/>
            <person name="Parker D."/>
            <person name="Parrish J."/>
            <person name="Pasternak S."/>
            <person name="Patel D."/>
            <person name="Pearce A.V."/>
            <person name="Pearson D.M."/>
            <person name="Pelan S.E."/>
            <person name="Perez L."/>
            <person name="Porter K.M."/>
            <person name="Ramsey Y."/>
            <person name="Reichwald K."/>
            <person name="Rhodes S."/>
            <person name="Ridler K.A."/>
            <person name="Schlessinger D."/>
            <person name="Schueler M.G."/>
            <person name="Sehra H.K."/>
            <person name="Shaw-Smith C."/>
            <person name="Shen H."/>
            <person name="Sheridan E.M."/>
            <person name="Shownkeen R."/>
            <person name="Skuce C.D."/>
            <person name="Smith M.L."/>
            <person name="Sotheran E.C."/>
            <person name="Steingruber H.E."/>
            <person name="Steward C.A."/>
            <person name="Storey R."/>
            <person name="Swann R.M."/>
            <person name="Swarbreck D."/>
            <person name="Tabor P.E."/>
            <person name="Taudien S."/>
            <person name="Taylor T."/>
            <person name="Teague B."/>
            <person name="Thomas K."/>
            <person name="Thorpe A."/>
            <person name="Timms K."/>
            <person name="Tracey A."/>
            <person name="Trevanion S."/>
            <person name="Tromans A.C."/>
            <person name="d'Urso M."/>
            <person name="Verduzco D."/>
            <person name="Villasana D."/>
            <person name="Waldron L."/>
            <person name="Wall M."/>
            <person name="Wang Q."/>
            <person name="Warren J."/>
            <person name="Warry G.L."/>
            <person name="Wei X."/>
            <person name="West A."/>
            <person name="Whitehead S.L."/>
            <person name="Whiteley M.N."/>
            <person name="Wilkinson J.E."/>
            <person name="Willey D.L."/>
            <person name="Williams G."/>
            <person name="Williams L."/>
            <person name="Williamson A."/>
            <person name="Williamson H."/>
            <person name="Wilming L."/>
            <person name="Woodmansey R.L."/>
            <person name="Wray P.W."/>
            <person name="Yen J."/>
            <person name="Zhang J."/>
            <person name="Zhou J."/>
            <person name="Zoghbi H."/>
            <person name="Zorilla S."/>
            <person name="Buck D."/>
            <person name="Reinhardt R."/>
            <person name="Poustka A."/>
            <person name="Rosenthal A."/>
            <person name="Lehrach H."/>
            <person name="Meindl A."/>
            <person name="Minx P.J."/>
            <person name="Hillier L.W."/>
            <person name="Willard H.F."/>
            <person name="Wilson R.K."/>
            <person name="Waterston R.H."/>
            <person name="Rice C.M."/>
            <person name="Vaudin M."/>
            <person name="Coulson A."/>
            <person name="Nelson D.L."/>
            <person name="Weinstock G."/>
            <person name="Sulston J.E."/>
            <person name="Durbin R.M."/>
            <person name="Hubbard T."/>
            <person name="Gibbs R.A."/>
            <person name="Beck S."/>
            <person name="Rogers J."/>
            <person name="Bentley D.R."/>
        </authorList>
    </citation>
    <scope>NUCLEOTIDE SEQUENCE [LARGE SCALE GENOMIC DNA]</scope>
</reference>
<reference key="4">
    <citation type="submission" date="2005-07" db="EMBL/GenBank/DDBJ databases">
        <authorList>
            <person name="Mural R.J."/>
            <person name="Istrail S."/>
            <person name="Sutton G.G."/>
            <person name="Florea L."/>
            <person name="Halpern A.L."/>
            <person name="Mobarry C.M."/>
            <person name="Lippert R."/>
            <person name="Walenz B."/>
            <person name="Shatkay H."/>
            <person name="Dew I."/>
            <person name="Miller J.R."/>
            <person name="Flanigan M.J."/>
            <person name="Edwards N.J."/>
            <person name="Bolanos R."/>
            <person name="Fasulo D."/>
            <person name="Halldorsson B.V."/>
            <person name="Hannenhalli S."/>
            <person name="Turner R."/>
            <person name="Yooseph S."/>
            <person name="Lu F."/>
            <person name="Nusskern D.R."/>
            <person name="Shue B.C."/>
            <person name="Zheng X.H."/>
            <person name="Zhong F."/>
            <person name="Delcher A.L."/>
            <person name="Huson D.H."/>
            <person name="Kravitz S.A."/>
            <person name="Mouchard L."/>
            <person name="Reinert K."/>
            <person name="Remington K.A."/>
            <person name="Clark A.G."/>
            <person name="Waterman M.S."/>
            <person name="Eichler E.E."/>
            <person name="Adams M.D."/>
            <person name="Hunkapiller M.W."/>
            <person name="Myers E.W."/>
            <person name="Venter J.C."/>
        </authorList>
    </citation>
    <scope>NUCLEOTIDE SEQUENCE [LARGE SCALE GENOMIC DNA]</scope>
</reference>
<reference key="5">
    <citation type="journal article" date="2004" name="Genome Res.">
        <title>The status, quality, and expansion of the NIH full-length cDNA project: the Mammalian Gene Collection (MGC).</title>
        <authorList>
            <consortium name="The MGC Project Team"/>
        </authorList>
    </citation>
    <scope>NUCLEOTIDE SEQUENCE [LARGE SCALE MRNA]</scope>
</reference>
<reference key="6">
    <citation type="journal article" date="2007" name="BMC Genomics">
        <title>The full-ORF clone resource of the German cDNA consortium.</title>
        <authorList>
            <person name="Bechtel S."/>
            <person name="Rosenfelder H."/>
            <person name="Duda A."/>
            <person name="Schmidt C.P."/>
            <person name="Ernst U."/>
            <person name="Wellenreuther R."/>
            <person name="Mehrle A."/>
            <person name="Schuster C."/>
            <person name="Bahr A."/>
            <person name="Bloecker H."/>
            <person name="Heubner D."/>
            <person name="Hoerlein A."/>
            <person name="Michel G."/>
            <person name="Wedler H."/>
            <person name="Koehrer K."/>
            <person name="Ottenwaelder B."/>
            <person name="Poustka A."/>
            <person name="Wiemann S."/>
            <person name="Schupp I."/>
        </authorList>
    </citation>
    <scope>NUCLEOTIDE SEQUENCE [LARGE SCALE MRNA] OF 16-382</scope>
    <source>
        <tissue>Testis</tissue>
    </source>
</reference>
<reference key="7">
    <citation type="journal article" date="2013" name="Nucleic Acids Res.">
        <title>Alternative translation initiation augments the human mitochondrial proteome.</title>
        <authorList>
            <person name="Kazak L."/>
            <person name="Reyes A."/>
            <person name="Duncan A.L."/>
            <person name="Rorbach J."/>
            <person name="Wood S.R."/>
            <person name="Brea-Calvo G."/>
            <person name="Gammage P.A."/>
            <person name="Robinson A.J."/>
            <person name="Minczuk M."/>
            <person name="Holt I.J."/>
        </authorList>
    </citation>
    <scope>ALTERNATIVE INITIATION (ISOFORM 2)</scope>
    <scope>SUBCELLULAR LOCATION (ISOFORM 2)</scope>
</reference>